<keyword id="KW-0687">Ribonucleoprotein</keyword>
<keyword id="KW-0689">Ribosomal protein</keyword>
<name>RL30_BARHE</name>
<feature type="chain" id="PRO_1000056011" description="Large ribosomal subunit protein uL30">
    <location>
        <begin position="1"/>
        <end position="68"/>
    </location>
</feature>
<evidence type="ECO:0000255" key="1">
    <source>
        <dbReference type="HAMAP-Rule" id="MF_01371"/>
    </source>
</evidence>
<evidence type="ECO:0000305" key="2"/>
<organism>
    <name type="scientific">Bartonella henselae (strain ATCC 49882 / DSM 28221 / CCUG 30454 / Houston 1)</name>
    <name type="common">Rochalimaea henselae</name>
    <dbReference type="NCBI Taxonomy" id="283166"/>
    <lineage>
        <taxon>Bacteria</taxon>
        <taxon>Pseudomonadati</taxon>
        <taxon>Pseudomonadota</taxon>
        <taxon>Alphaproteobacteria</taxon>
        <taxon>Hyphomicrobiales</taxon>
        <taxon>Bartonellaceae</taxon>
        <taxon>Bartonella</taxon>
    </lineage>
</organism>
<sequence>MVQKKSQSSKTVTVEQIGSPIRNSQIQRATLKGLGLNKMHRRRVLEDTLCVRGMIAKVQHLVRVIDES</sequence>
<proteinExistence type="inferred from homology"/>
<accession>Q6G2Y3</accession>
<protein>
    <recommendedName>
        <fullName evidence="1">Large ribosomal subunit protein uL30</fullName>
    </recommendedName>
    <alternativeName>
        <fullName evidence="2">50S ribosomal protein L30</fullName>
    </alternativeName>
</protein>
<dbReference type="EMBL" id="BX897699">
    <property type="protein sequence ID" value="CAF27824.1"/>
    <property type="molecule type" value="Genomic_DNA"/>
</dbReference>
<dbReference type="RefSeq" id="WP_011180896.1">
    <property type="nucleotide sequence ID" value="NZ_LRIJ02000001.1"/>
</dbReference>
<dbReference type="SMR" id="Q6G2Y3"/>
<dbReference type="PaxDb" id="283166-BH10330"/>
<dbReference type="EnsemblBacteria" id="CAF27824">
    <property type="protein sequence ID" value="CAF27824"/>
    <property type="gene ID" value="BH10330"/>
</dbReference>
<dbReference type="GeneID" id="92985281"/>
<dbReference type="KEGG" id="bhe:BH10330"/>
<dbReference type="eggNOG" id="COG1841">
    <property type="taxonomic scope" value="Bacteria"/>
</dbReference>
<dbReference type="OrthoDB" id="9812790at2"/>
<dbReference type="Proteomes" id="UP000000421">
    <property type="component" value="Chromosome"/>
</dbReference>
<dbReference type="GO" id="GO:0022625">
    <property type="term" value="C:cytosolic large ribosomal subunit"/>
    <property type="evidence" value="ECO:0007669"/>
    <property type="project" value="TreeGrafter"/>
</dbReference>
<dbReference type="GO" id="GO:0003735">
    <property type="term" value="F:structural constituent of ribosome"/>
    <property type="evidence" value="ECO:0007669"/>
    <property type="project" value="InterPro"/>
</dbReference>
<dbReference type="GO" id="GO:0006412">
    <property type="term" value="P:translation"/>
    <property type="evidence" value="ECO:0007669"/>
    <property type="project" value="UniProtKB-UniRule"/>
</dbReference>
<dbReference type="CDD" id="cd01658">
    <property type="entry name" value="Ribosomal_L30"/>
    <property type="match status" value="1"/>
</dbReference>
<dbReference type="Gene3D" id="3.30.1390.20">
    <property type="entry name" value="Ribosomal protein L30, ferredoxin-like fold domain"/>
    <property type="match status" value="1"/>
</dbReference>
<dbReference type="HAMAP" id="MF_01371_B">
    <property type="entry name" value="Ribosomal_uL30_B"/>
    <property type="match status" value="1"/>
</dbReference>
<dbReference type="InterPro" id="IPR036919">
    <property type="entry name" value="Ribo_uL30_ferredoxin-like_sf"/>
</dbReference>
<dbReference type="InterPro" id="IPR005996">
    <property type="entry name" value="Ribosomal_uL30_bac-type"/>
</dbReference>
<dbReference type="InterPro" id="IPR016082">
    <property type="entry name" value="Ribosomal_uL30_ferredoxin-like"/>
</dbReference>
<dbReference type="NCBIfam" id="TIGR01308">
    <property type="entry name" value="rpmD_bact"/>
    <property type="match status" value="1"/>
</dbReference>
<dbReference type="PANTHER" id="PTHR15892:SF2">
    <property type="entry name" value="LARGE RIBOSOMAL SUBUNIT PROTEIN UL30M"/>
    <property type="match status" value="1"/>
</dbReference>
<dbReference type="PANTHER" id="PTHR15892">
    <property type="entry name" value="MITOCHONDRIAL RIBOSOMAL PROTEIN L30"/>
    <property type="match status" value="1"/>
</dbReference>
<dbReference type="Pfam" id="PF00327">
    <property type="entry name" value="Ribosomal_L30"/>
    <property type="match status" value="1"/>
</dbReference>
<dbReference type="PIRSF" id="PIRSF002211">
    <property type="entry name" value="Ribosomal_L30_bac-type"/>
    <property type="match status" value="1"/>
</dbReference>
<dbReference type="SUPFAM" id="SSF55129">
    <property type="entry name" value="Ribosomal protein L30p/L7e"/>
    <property type="match status" value="1"/>
</dbReference>
<gene>
    <name evidence="1" type="primary">rpmD</name>
    <name type="ordered locus">BH10330</name>
</gene>
<comment type="subunit">
    <text evidence="1">Part of the 50S ribosomal subunit.</text>
</comment>
<comment type="similarity">
    <text evidence="1">Belongs to the universal ribosomal protein uL30 family.</text>
</comment>
<reference key="1">
    <citation type="journal article" date="2004" name="Proc. Natl. Acad. Sci. U.S.A.">
        <title>The louse-borne human pathogen Bartonella quintana is a genomic derivative of the zoonotic agent Bartonella henselae.</title>
        <authorList>
            <person name="Alsmark U.C.M."/>
            <person name="Frank A.C."/>
            <person name="Karlberg E.O."/>
            <person name="Legault B.-A."/>
            <person name="Ardell D.H."/>
            <person name="Canbaeck B."/>
            <person name="Eriksson A.-S."/>
            <person name="Naeslund A.K."/>
            <person name="Handley S.A."/>
            <person name="Huvet M."/>
            <person name="La Scola B."/>
            <person name="Holmberg M."/>
            <person name="Andersson S.G.E."/>
        </authorList>
    </citation>
    <scope>NUCLEOTIDE SEQUENCE [LARGE SCALE GENOMIC DNA]</scope>
    <source>
        <strain>ATCC 49882 / DSM 28221 / CCUG 30454 / Houston 1</strain>
    </source>
</reference>